<accession>P15459</accession>
<gene>
    <name type="primary">AT2S3</name>
    <name type="ordered locus">At4g27160</name>
    <name type="ORF">T24A18.110</name>
</gene>
<evidence type="ECO:0000250" key="1"/>
<evidence type="ECO:0000269" key="2">
    <source>
    </source>
</evidence>
<evidence type="ECO:0000305" key="3"/>
<name>2SS3_ARATH</name>
<proteinExistence type="evidence at protein level"/>
<protein>
    <recommendedName>
        <fullName>2S seed storage protein 3</fullName>
    </recommendedName>
    <alternativeName>
        <fullName>2S albumin storage protein</fullName>
    </alternativeName>
    <alternativeName>
        <fullName>NWMU2-2S albumin 3</fullName>
    </alternativeName>
    <component>
        <recommendedName>
            <fullName>2S seed storage protein 3 small subunit</fullName>
        </recommendedName>
    </component>
    <component>
        <recommendedName>
            <fullName>2S seed storage protein 3 large subunit</fullName>
        </recommendedName>
    </component>
</protein>
<dbReference type="EMBL" id="AH001334">
    <property type="protein sequence ID" value="AAA32745.1"/>
    <property type="molecule type" value="Genomic_DNA"/>
</dbReference>
<dbReference type="EMBL" id="Z24744">
    <property type="protein sequence ID" value="CAA80868.1"/>
    <property type="molecule type" value="Genomic_DNA"/>
</dbReference>
<dbReference type="EMBL" id="AL035680">
    <property type="protein sequence ID" value="CAB38846.1"/>
    <property type="molecule type" value="Genomic_DNA"/>
</dbReference>
<dbReference type="EMBL" id="AL161566">
    <property type="protein sequence ID" value="CAB79571.1"/>
    <property type="molecule type" value="Genomic_DNA"/>
</dbReference>
<dbReference type="EMBL" id="CP002687">
    <property type="protein sequence ID" value="AEE85308.1"/>
    <property type="molecule type" value="Genomic_DNA"/>
</dbReference>
<dbReference type="EMBL" id="AY080779">
    <property type="protein sequence ID" value="AAL87263.1"/>
    <property type="molecule type" value="mRNA"/>
</dbReference>
<dbReference type="EMBL" id="AY117157">
    <property type="protein sequence ID" value="AAM51232.1"/>
    <property type="molecule type" value="mRNA"/>
</dbReference>
<dbReference type="EMBL" id="Z17580">
    <property type="protein sequence ID" value="CAA79001.1"/>
    <property type="molecule type" value="mRNA"/>
</dbReference>
<dbReference type="PIR" id="JA0163">
    <property type="entry name" value="NWMU3"/>
</dbReference>
<dbReference type="RefSeq" id="NP_194446.1">
    <property type="nucleotide sequence ID" value="NM_118850.3"/>
</dbReference>
<dbReference type="SMR" id="P15459"/>
<dbReference type="BioGRID" id="14111">
    <property type="interactions" value="3"/>
</dbReference>
<dbReference type="FunCoup" id="P15459">
    <property type="interactions" value="49"/>
</dbReference>
<dbReference type="IntAct" id="P15459">
    <property type="interactions" value="1"/>
</dbReference>
<dbReference type="STRING" id="3702.P15459"/>
<dbReference type="PaxDb" id="3702-AT4G27160.1"/>
<dbReference type="ProteomicsDB" id="244610"/>
<dbReference type="EnsemblPlants" id="AT4G27160.1">
    <property type="protein sequence ID" value="AT4G27160.1"/>
    <property type="gene ID" value="AT4G27160"/>
</dbReference>
<dbReference type="GeneID" id="828824"/>
<dbReference type="Gramene" id="AT4G27160.1">
    <property type="protein sequence ID" value="AT4G27160.1"/>
    <property type="gene ID" value="AT4G27160"/>
</dbReference>
<dbReference type="KEGG" id="ath:AT4G27160"/>
<dbReference type="Araport" id="AT4G27160"/>
<dbReference type="TAIR" id="AT4G27160">
    <property type="gene designation" value="SESA3"/>
</dbReference>
<dbReference type="eggNOG" id="ENOG502S7EV">
    <property type="taxonomic scope" value="Eukaryota"/>
</dbReference>
<dbReference type="HOGENOM" id="CLU_131213_1_0_1"/>
<dbReference type="InParanoid" id="P15459"/>
<dbReference type="OMA" id="QKCRKEF"/>
<dbReference type="OrthoDB" id="1922883at2759"/>
<dbReference type="PhylomeDB" id="P15459"/>
<dbReference type="PRO" id="PR:P15459"/>
<dbReference type="Proteomes" id="UP000006548">
    <property type="component" value="Chromosome 4"/>
</dbReference>
<dbReference type="ExpressionAtlas" id="P15459">
    <property type="expression patterns" value="baseline and differential"/>
</dbReference>
<dbReference type="GO" id="GO:0045735">
    <property type="term" value="F:nutrient reservoir activity"/>
    <property type="evidence" value="ECO:0007669"/>
    <property type="project" value="UniProtKB-KW"/>
</dbReference>
<dbReference type="GO" id="GO:0043424">
    <property type="term" value="F:protein histidine kinase binding"/>
    <property type="evidence" value="ECO:0000353"/>
    <property type="project" value="UniProtKB"/>
</dbReference>
<dbReference type="CDD" id="cd00261">
    <property type="entry name" value="AAI_SS"/>
    <property type="match status" value="1"/>
</dbReference>
<dbReference type="Gene3D" id="1.10.110.10">
    <property type="entry name" value="Plant lipid-transfer and hydrophobic proteins"/>
    <property type="match status" value="1"/>
</dbReference>
<dbReference type="InterPro" id="IPR036312">
    <property type="entry name" value="Bifun_inhib/LTP/seed_sf"/>
</dbReference>
<dbReference type="InterPro" id="IPR016140">
    <property type="entry name" value="Bifunc_inhib/LTP/seed_store"/>
</dbReference>
<dbReference type="InterPro" id="IPR000617">
    <property type="entry name" value="Napin/2SS/CON"/>
</dbReference>
<dbReference type="PANTHER" id="PTHR35496">
    <property type="entry name" value="2S SEED STORAGE PROTEIN 1-RELATED"/>
    <property type="match status" value="1"/>
</dbReference>
<dbReference type="PANTHER" id="PTHR35496:SF20">
    <property type="entry name" value="2S SEED STORAGE PROTEIN 1-RELATED"/>
    <property type="match status" value="1"/>
</dbReference>
<dbReference type="Pfam" id="PF00234">
    <property type="entry name" value="Tryp_alpha_amyl"/>
    <property type="match status" value="1"/>
</dbReference>
<dbReference type="PRINTS" id="PR00496">
    <property type="entry name" value="NAPIN"/>
</dbReference>
<dbReference type="SMART" id="SM00499">
    <property type="entry name" value="AAI"/>
    <property type="match status" value="1"/>
</dbReference>
<dbReference type="SUPFAM" id="SSF47699">
    <property type="entry name" value="Bifunctional inhibitor/lipid-transfer protein/seed storage 2S albumin"/>
    <property type="match status" value="1"/>
</dbReference>
<keyword id="KW-1015">Disulfide bond</keyword>
<keyword id="KW-1185">Reference proteome</keyword>
<keyword id="KW-0708">Seed storage protein</keyword>
<keyword id="KW-0732">Signal</keyword>
<keyword id="KW-0758">Storage protein</keyword>
<organism>
    <name type="scientific">Arabidopsis thaliana</name>
    <name type="common">Mouse-ear cress</name>
    <dbReference type="NCBI Taxonomy" id="3702"/>
    <lineage>
        <taxon>Eukaryota</taxon>
        <taxon>Viridiplantae</taxon>
        <taxon>Streptophyta</taxon>
        <taxon>Embryophyta</taxon>
        <taxon>Tracheophyta</taxon>
        <taxon>Spermatophyta</taxon>
        <taxon>Magnoliopsida</taxon>
        <taxon>eudicotyledons</taxon>
        <taxon>Gunneridae</taxon>
        <taxon>Pentapetalae</taxon>
        <taxon>rosids</taxon>
        <taxon>malvids</taxon>
        <taxon>Brassicales</taxon>
        <taxon>Brassicaceae</taxon>
        <taxon>Camelineae</taxon>
        <taxon>Arabidopsis</taxon>
    </lineage>
</organism>
<sequence>MANKLFLVCATLALCFLLTNASIYRTVVEFEEDDASNPVGPRQRCQKEFQQSQHLRACQRWMSKQMRQGRGGGPSLDDEFDFEGPQQGYQLLQQCCNELRQEEPVCVCPTLKQAARAVSLQGQHGPFQSRKIYQSAKYLPNICKIQQVGECPFQTTIPFFPPYY</sequence>
<comment type="function">
    <text>This is a 2S seed storage protein.</text>
</comment>
<comment type="subunit">
    <text evidence="2">The mature protein consists of a small and a large chain linked by disulfide bonds. Interacts with AHK2.</text>
</comment>
<comment type="interaction">
    <interactant intactId="EBI-1807552">
        <id>P15459</id>
    </interactant>
    <interactant intactId="EBI-1100634">
        <id>Q9C5U2</id>
        <label>AHK2</label>
    </interactant>
    <organismsDiffer>false</organismsDiffer>
    <experiments>2</experiments>
</comment>
<comment type="similarity">
    <text evidence="3">Belongs to the 2S seed storage albumins family.</text>
</comment>
<reference key="1">
    <citation type="journal article" date="1988" name="Plant Physiol.">
        <title>Determination of the processing sites of an Arabidopsis 2S albumin and characterization of the complete gene family.</title>
        <authorList>
            <person name="Krebbers E."/>
            <person name="Herdies L."/>
            <person name="de Clercq A."/>
            <person name="Seurinck J."/>
            <person name="Leemans J."/>
            <person name="van Damme J."/>
            <person name="Segura M."/>
            <person name="Gheysen G."/>
            <person name="van Montagu M."/>
            <person name="Vandekerckhove J."/>
        </authorList>
    </citation>
    <scope>NUCLEOTIDE SEQUENCE [GENOMIC DNA]</scope>
    <source>
        <strain>cv. C24</strain>
    </source>
</reference>
<reference key="2">
    <citation type="journal article" date="1994" name="Plant J.">
        <title>A cotyledon regulatory region is responsible for the different spatial expression patterns of Arabidopsis 2S albumin genes.</title>
        <authorList>
            <person name="da Silva Conceicao A."/>
            <person name="Krebbers E."/>
        </authorList>
    </citation>
    <scope>NUCLEOTIDE SEQUENCE [GENOMIC DNA]</scope>
    <source>
        <strain>cv. C24</strain>
    </source>
</reference>
<reference key="3">
    <citation type="journal article" date="1999" name="Nature">
        <title>Sequence and analysis of chromosome 4 of the plant Arabidopsis thaliana.</title>
        <authorList>
            <person name="Mayer K.F.X."/>
            <person name="Schueller C."/>
            <person name="Wambutt R."/>
            <person name="Murphy G."/>
            <person name="Volckaert G."/>
            <person name="Pohl T."/>
            <person name="Duesterhoeft A."/>
            <person name="Stiekema W."/>
            <person name="Entian K.-D."/>
            <person name="Terryn N."/>
            <person name="Harris B."/>
            <person name="Ansorge W."/>
            <person name="Brandt P."/>
            <person name="Grivell L.A."/>
            <person name="Rieger M."/>
            <person name="Weichselgartner M."/>
            <person name="de Simone V."/>
            <person name="Obermaier B."/>
            <person name="Mache R."/>
            <person name="Mueller M."/>
            <person name="Kreis M."/>
            <person name="Delseny M."/>
            <person name="Puigdomenech P."/>
            <person name="Watson M."/>
            <person name="Schmidtheini T."/>
            <person name="Reichert B."/>
            <person name="Portetelle D."/>
            <person name="Perez-Alonso M."/>
            <person name="Boutry M."/>
            <person name="Bancroft I."/>
            <person name="Vos P."/>
            <person name="Hoheisel J."/>
            <person name="Zimmermann W."/>
            <person name="Wedler H."/>
            <person name="Ridley P."/>
            <person name="Langham S.-A."/>
            <person name="McCullagh B."/>
            <person name="Bilham L."/>
            <person name="Robben J."/>
            <person name="van der Schueren J."/>
            <person name="Grymonprez B."/>
            <person name="Chuang Y.-J."/>
            <person name="Vandenbussche F."/>
            <person name="Braeken M."/>
            <person name="Weltjens I."/>
            <person name="Voet M."/>
            <person name="Bastiaens I."/>
            <person name="Aert R."/>
            <person name="Defoor E."/>
            <person name="Weitzenegger T."/>
            <person name="Bothe G."/>
            <person name="Ramsperger U."/>
            <person name="Hilbert H."/>
            <person name="Braun M."/>
            <person name="Holzer E."/>
            <person name="Brandt A."/>
            <person name="Peters S."/>
            <person name="van Staveren M."/>
            <person name="Dirkse W."/>
            <person name="Mooijman P."/>
            <person name="Klein Lankhorst R."/>
            <person name="Rose M."/>
            <person name="Hauf J."/>
            <person name="Koetter P."/>
            <person name="Berneiser S."/>
            <person name="Hempel S."/>
            <person name="Feldpausch M."/>
            <person name="Lamberth S."/>
            <person name="Van den Daele H."/>
            <person name="De Keyser A."/>
            <person name="Buysshaert C."/>
            <person name="Gielen J."/>
            <person name="Villarroel R."/>
            <person name="De Clercq R."/>
            <person name="van Montagu M."/>
            <person name="Rogers J."/>
            <person name="Cronin A."/>
            <person name="Quail M.A."/>
            <person name="Bray-Allen S."/>
            <person name="Clark L."/>
            <person name="Doggett J."/>
            <person name="Hall S."/>
            <person name="Kay M."/>
            <person name="Lennard N."/>
            <person name="McLay K."/>
            <person name="Mayes R."/>
            <person name="Pettett A."/>
            <person name="Rajandream M.A."/>
            <person name="Lyne M."/>
            <person name="Benes V."/>
            <person name="Rechmann S."/>
            <person name="Borkova D."/>
            <person name="Bloecker H."/>
            <person name="Scharfe M."/>
            <person name="Grimm M."/>
            <person name="Loehnert T.-H."/>
            <person name="Dose S."/>
            <person name="de Haan M."/>
            <person name="Maarse A.C."/>
            <person name="Schaefer M."/>
            <person name="Mueller-Auer S."/>
            <person name="Gabel C."/>
            <person name="Fuchs M."/>
            <person name="Fartmann B."/>
            <person name="Granderath K."/>
            <person name="Dauner D."/>
            <person name="Herzl A."/>
            <person name="Neumann S."/>
            <person name="Argiriou A."/>
            <person name="Vitale D."/>
            <person name="Liguori R."/>
            <person name="Piravandi E."/>
            <person name="Massenet O."/>
            <person name="Quigley F."/>
            <person name="Clabauld G."/>
            <person name="Muendlein A."/>
            <person name="Felber R."/>
            <person name="Schnabl S."/>
            <person name="Hiller R."/>
            <person name="Schmidt W."/>
            <person name="Lecharny A."/>
            <person name="Aubourg S."/>
            <person name="Chefdor F."/>
            <person name="Cooke R."/>
            <person name="Berger C."/>
            <person name="Monfort A."/>
            <person name="Casacuberta E."/>
            <person name="Gibbons T."/>
            <person name="Weber N."/>
            <person name="Vandenbol M."/>
            <person name="Bargues M."/>
            <person name="Terol J."/>
            <person name="Torres A."/>
            <person name="Perez-Perez A."/>
            <person name="Purnelle B."/>
            <person name="Bent E."/>
            <person name="Johnson S."/>
            <person name="Tacon D."/>
            <person name="Jesse T."/>
            <person name="Heijnen L."/>
            <person name="Schwarz S."/>
            <person name="Scholler P."/>
            <person name="Heber S."/>
            <person name="Francs P."/>
            <person name="Bielke C."/>
            <person name="Frishman D."/>
            <person name="Haase D."/>
            <person name="Lemcke K."/>
            <person name="Mewes H.-W."/>
            <person name="Stocker S."/>
            <person name="Zaccaria P."/>
            <person name="Bevan M."/>
            <person name="Wilson R.K."/>
            <person name="de la Bastide M."/>
            <person name="Habermann K."/>
            <person name="Parnell L."/>
            <person name="Dedhia N."/>
            <person name="Gnoj L."/>
            <person name="Schutz K."/>
            <person name="Huang E."/>
            <person name="Spiegel L."/>
            <person name="Sekhon M."/>
            <person name="Murray J."/>
            <person name="Sheet P."/>
            <person name="Cordes M."/>
            <person name="Abu-Threideh J."/>
            <person name="Stoneking T."/>
            <person name="Kalicki J."/>
            <person name="Graves T."/>
            <person name="Harmon G."/>
            <person name="Edwards J."/>
            <person name="Latreille P."/>
            <person name="Courtney L."/>
            <person name="Cloud J."/>
            <person name="Abbott A."/>
            <person name="Scott K."/>
            <person name="Johnson D."/>
            <person name="Minx P."/>
            <person name="Bentley D."/>
            <person name="Fulton B."/>
            <person name="Miller N."/>
            <person name="Greco T."/>
            <person name="Kemp K."/>
            <person name="Kramer J."/>
            <person name="Fulton L."/>
            <person name="Mardis E."/>
            <person name="Dante M."/>
            <person name="Pepin K."/>
            <person name="Hillier L.W."/>
            <person name="Nelson J."/>
            <person name="Spieth J."/>
            <person name="Ryan E."/>
            <person name="Andrews S."/>
            <person name="Geisel C."/>
            <person name="Layman D."/>
            <person name="Du H."/>
            <person name="Ali J."/>
            <person name="Berghoff A."/>
            <person name="Jones K."/>
            <person name="Drone K."/>
            <person name="Cotton M."/>
            <person name="Joshu C."/>
            <person name="Antonoiu B."/>
            <person name="Zidanic M."/>
            <person name="Strong C."/>
            <person name="Sun H."/>
            <person name="Lamar B."/>
            <person name="Yordan C."/>
            <person name="Ma P."/>
            <person name="Zhong J."/>
            <person name="Preston R."/>
            <person name="Vil D."/>
            <person name="Shekher M."/>
            <person name="Matero A."/>
            <person name="Shah R."/>
            <person name="Swaby I.K."/>
            <person name="O'Shaughnessy A."/>
            <person name="Rodriguez M."/>
            <person name="Hoffman J."/>
            <person name="Till S."/>
            <person name="Granat S."/>
            <person name="Shohdy N."/>
            <person name="Hasegawa A."/>
            <person name="Hameed A."/>
            <person name="Lodhi M."/>
            <person name="Johnson A."/>
            <person name="Chen E."/>
            <person name="Marra M.A."/>
            <person name="Martienssen R."/>
            <person name="McCombie W.R."/>
        </authorList>
    </citation>
    <scope>NUCLEOTIDE SEQUENCE [LARGE SCALE GENOMIC DNA]</scope>
    <source>
        <strain>cv. Columbia</strain>
    </source>
</reference>
<reference key="4">
    <citation type="journal article" date="2017" name="Plant J.">
        <title>Araport11: a complete reannotation of the Arabidopsis thaliana reference genome.</title>
        <authorList>
            <person name="Cheng C.Y."/>
            <person name="Krishnakumar V."/>
            <person name="Chan A.P."/>
            <person name="Thibaud-Nissen F."/>
            <person name="Schobel S."/>
            <person name="Town C.D."/>
        </authorList>
    </citation>
    <scope>GENOME REANNOTATION</scope>
    <source>
        <strain>cv. Columbia</strain>
    </source>
</reference>
<reference key="5">
    <citation type="journal article" date="2003" name="Science">
        <title>Empirical analysis of transcriptional activity in the Arabidopsis genome.</title>
        <authorList>
            <person name="Yamada K."/>
            <person name="Lim J."/>
            <person name="Dale J.M."/>
            <person name="Chen H."/>
            <person name="Shinn P."/>
            <person name="Palm C.J."/>
            <person name="Southwick A.M."/>
            <person name="Wu H.C."/>
            <person name="Kim C.J."/>
            <person name="Nguyen M."/>
            <person name="Pham P.K."/>
            <person name="Cheuk R.F."/>
            <person name="Karlin-Newmann G."/>
            <person name="Liu S.X."/>
            <person name="Lam B."/>
            <person name="Sakano H."/>
            <person name="Wu T."/>
            <person name="Yu G."/>
            <person name="Miranda M."/>
            <person name="Quach H.L."/>
            <person name="Tripp M."/>
            <person name="Chang C.H."/>
            <person name="Lee J.M."/>
            <person name="Toriumi M.J."/>
            <person name="Chan M.M."/>
            <person name="Tang C.C."/>
            <person name="Onodera C.S."/>
            <person name="Deng J.M."/>
            <person name="Akiyama K."/>
            <person name="Ansari Y."/>
            <person name="Arakawa T."/>
            <person name="Banh J."/>
            <person name="Banno F."/>
            <person name="Bowser L."/>
            <person name="Brooks S.Y."/>
            <person name="Carninci P."/>
            <person name="Chao Q."/>
            <person name="Choy N."/>
            <person name="Enju A."/>
            <person name="Goldsmith A.D."/>
            <person name="Gurjal M."/>
            <person name="Hansen N.F."/>
            <person name="Hayashizaki Y."/>
            <person name="Johnson-Hopson C."/>
            <person name="Hsuan V.W."/>
            <person name="Iida K."/>
            <person name="Karnes M."/>
            <person name="Khan S."/>
            <person name="Koesema E."/>
            <person name="Ishida J."/>
            <person name="Jiang P.X."/>
            <person name="Jones T."/>
            <person name="Kawai J."/>
            <person name="Kamiya A."/>
            <person name="Meyers C."/>
            <person name="Nakajima M."/>
            <person name="Narusaka M."/>
            <person name="Seki M."/>
            <person name="Sakurai T."/>
            <person name="Satou M."/>
            <person name="Tamse R."/>
            <person name="Vaysberg M."/>
            <person name="Wallender E.K."/>
            <person name="Wong C."/>
            <person name="Yamamura Y."/>
            <person name="Yuan S."/>
            <person name="Shinozaki K."/>
            <person name="Davis R.W."/>
            <person name="Theologis A."/>
            <person name="Ecker J.R."/>
        </authorList>
    </citation>
    <scope>NUCLEOTIDE SEQUENCE [LARGE SCALE MRNA]</scope>
    <source>
        <strain>cv. Columbia</strain>
    </source>
</reference>
<reference key="6">
    <citation type="journal article" date="1993" name="Plant J.">
        <title>An inventory of 1152 expressed sequence tags obtained by partial sequencing of cDNAs from Arabidopsis thaliana.</title>
        <authorList>
            <person name="Hoefte H."/>
            <person name="Desprez T."/>
            <person name="Amselem J."/>
            <person name="Chiapello H."/>
            <person name="Rouze P."/>
            <person name="Caboche M."/>
            <person name="Moisan A."/>
            <person name="Jourjon M.-F."/>
            <person name="Charpenteau J.-L."/>
            <person name="Berthomieu P."/>
            <person name="Guerrier D."/>
            <person name="Giraudat J."/>
            <person name="Quigley F."/>
            <person name="Thomas F."/>
            <person name="Yu D.-Y."/>
            <person name="Mache R."/>
            <person name="Raynal M."/>
            <person name="Cooke R."/>
            <person name="Grellet F."/>
            <person name="Delseny M."/>
            <person name="Parmentier Y."/>
            <person name="de Marcillac G."/>
            <person name="Gigot C."/>
            <person name="Fleck J."/>
            <person name="Philipps G."/>
            <person name="Axelos M."/>
            <person name="Bardet C."/>
            <person name="Tremousaygue D."/>
            <person name="Lescure B."/>
        </authorList>
    </citation>
    <scope>NUCLEOTIDE SEQUENCE [LARGE SCALE MRNA] OF 103-164</scope>
    <source>
        <strain>cv. Columbia</strain>
        <tissue>Green siliques</tissue>
    </source>
</reference>
<reference key="7">
    <citation type="journal article" date="2008" name="J. Proteome Res.">
        <title>Toward an interaction map of the two-component signaling pathway of Arabidopsis thaliana.</title>
        <authorList>
            <person name="Dortay H."/>
            <person name="Gruhn N."/>
            <person name="Pfeifer A."/>
            <person name="Schwerdtner M."/>
            <person name="Schmuelling T."/>
            <person name="Heyl A."/>
        </authorList>
    </citation>
    <scope>INTERACTION WITH AHK2</scope>
</reference>
<feature type="signal peptide">
    <location>
        <begin position="1"/>
        <end position="21"/>
    </location>
</feature>
<feature type="propeptide" id="PRO_0000032097">
    <location>
        <begin position="22"/>
        <end position="37"/>
    </location>
</feature>
<feature type="chain" id="PRO_0000032098" description="2S seed storage protein 3 small subunit" evidence="1">
    <location>
        <begin position="38"/>
        <end position="72"/>
    </location>
</feature>
<feature type="propeptide" id="PRO_0000032099">
    <location>
        <begin position="73"/>
        <end position="81"/>
    </location>
</feature>
<feature type="chain" id="PRO_0000032100" description="2S seed storage protein 3 large subunit" evidence="1">
    <location>
        <begin position="82"/>
        <end position="164"/>
    </location>
</feature>